<protein>
    <recommendedName>
        <fullName>Iroquois-class homeodomain protein IRX-6</fullName>
    </recommendedName>
    <alternativeName>
        <fullName>Homeodomain protein IRXB3</fullName>
    </alternativeName>
    <alternativeName>
        <fullName>Iroquois homeobox protein 6</fullName>
    </alternativeName>
</protein>
<sequence length="446" mass="48240">MSFPHFGHPYRGASQFLASASSSTTCCESTQRSVSDVASGSTPAPALCCAPYDSRLLGSARPELGAALGIYGAPYAAAAAAQSYPGYLPYSPEPPSLYGALNPQYEFKEAAGSFTSSLAQPGAYYPYERTLGQYQYERYGAVELSGAGRRKNATRETTSTLKAWLNEHRKNPYPTKGEKIMLAIITKMTLTQVSTWFANARRRLKKENKMTWAPKNKGGEERKAEGGEEDSLGCLTADTKEVTASQEARGLRLSDLEDLEEEEEEEEEAEDEEVVATAGDRLTEFRKGAQSLPGPCAAAREGRLERRECGLAAPRFSFNDPSGSEEADFLSAETGSPRLTMHYPCLEKPRIWSLAHTATASAVEGAPPARPRPRSPECRMIPGQPPASARRLSVPRDSACDESSCIPKAFGNPKFALQGLPLNCAPCPRRSEPVVQCQYPSGAEAG</sequence>
<keyword id="KW-0238">DNA-binding</keyword>
<keyword id="KW-0371">Homeobox</keyword>
<keyword id="KW-0539">Nucleus</keyword>
<keyword id="KW-1267">Proteomics identification</keyword>
<keyword id="KW-1185">Reference proteome</keyword>
<dbReference type="EMBL" id="AY335937">
    <property type="protein sequence ID" value="AAQ16543.1"/>
    <property type="molecule type" value="mRNA"/>
</dbReference>
<dbReference type="EMBL" id="AY335946">
    <property type="protein sequence ID" value="AAQ16552.1"/>
    <property type="molecule type" value="Genomic_DNA"/>
</dbReference>
<dbReference type="EMBL" id="AK125053">
    <property type="protein sequence ID" value="BAC86033.1"/>
    <property type="molecule type" value="mRNA"/>
</dbReference>
<dbReference type="EMBL" id="CH471092">
    <property type="protein sequence ID" value="EAW82823.1"/>
    <property type="molecule type" value="Genomic_DNA"/>
</dbReference>
<dbReference type="EMBL" id="BC136573">
    <property type="protein sequence ID" value="AAI36574.1"/>
    <property type="molecule type" value="mRNA"/>
</dbReference>
<dbReference type="EMBL" id="BC136576">
    <property type="protein sequence ID" value="AAI36577.1"/>
    <property type="molecule type" value="mRNA"/>
</dbReference>
<dbReference type="EMBL" id="U90305">
    <property type="protein sequence ID" value="AAB50003.1"/>
    <property type="molecule type" value="mRNA"/>
</dbReference>
<dbReference type="CCDS" id="CCDS32449.1"/>
<dbReference type="RefSeq" id="NP_077311.2">
    <property type="nucleotide sequence ID" value="NM_024335.2"/>
</dbReference>
<dbReference type="RefSeq" id="XP_005256194.1">
    <property type="nucleotide sequence ID" value="XM_005256137.2"/>
</dbReference>
<dbReference type="SMR" id="P78412"/>
<dbReference type="BioGRID" id="122602">
    <property type="interactions" value="11"/>
</dbReference>
<dbReference type="FunCoup" id="P78412">
    <property type="interactions" value="566"/>
</dbReference>
<dbReference type="IntAct" id="P78412">
    <property type="interactions" value="12"/>
</dbReference>
<dbReference type="STRING" id="9606.ENSP00000290552"/>
<dbReference type="GlyGen" id="P78412">
    <property type="glycosylation" value="2 sites, 1 O-linked glycan (1 site)"/>
</dbReference>
<dbReference type="iPTMnet" id="P78412"/>
<dbReference type="PhosphoSitePlus" id="P78412"/>
<dbReference type="BioMuta" id="IRX6"/>
<dbReference type="DMDM" id="116242594"/>
<dbReference type="jPOST" id="P78412"/>
<dbReference type="MassIVE" id="P78412"/>
<dbReference type="PaxDb" id="9606-ENSP00000290552"/>
<dbReference type="PeptideAtlas" id="P78412"/>
<dbReference type="ProteomicsDB" id="57617"/>
<dbReference type="Antibodypedia" id="14626">
    <property type="antibodies" value="170 antibodies from 18 providers"/>
</dbReference>
<dbReference type="DNASU" id="79190"/>
<dbReference type="Ensembl" id="ENST00000290552.8">
    <property type="protein sequence ID" value="ENSP00000290552.8"/>
    <property type="gene ID" value="ENSG00000159387.8"/>
</dbReference>
<dbReference type="GeneID" id="79190"/>
<dbReference type="KEGG" id="hsa:79190"/>
<dbReference type="MANE-Select" id="ENST00000290552.8">
    <property type="protein sequence ID" value="ENSP00000290552.8"/>
    <property type="RefSeq nucleotide sequence ID" value="NM_024335.3"/>
    <property type="RefSeq protein sequence ID" value="NP_077311.2"/>
</dbReference>
<dbReference type="UCSC" id="uc002ehy.4">
    <property type="organism name" value="human"/>
</dbReference>
<dbReference type="AGR" id="HGNC:14675"/>
<dbReference type="CTD" id="79190"/>
<dbReference type="DisGeNET" id="79190"/>
<dbReference type="GeneCards" id="IRX6"/>
<dbReference type="HGNC" id="HGNC:14675">
    <property type="gene designation" value="IRX6"/>
</dbReference>
<dbReference type="HPA" id="ENSG00000159387">
    <property type="expression patterns" value="Tissue enhanced (adipose tissue, heart muscle, skin)"/>
</dbReference>
<dbReference type="MIM" id="606196">
    <property type="type" value="gene"/>
</dbReference>
<dbReference type="neXtProt" id="NX_P78412"/>
<dbReference type="OpenTargets" id="ENSG00000159387"/>
<dbReference type="PharmGKB" id="PA29929"/>
<dbReference type="VEuPathDB" id="HostDB:ENSG00000159387"/>
<dbReference type="eggNOG" id="KOG0773">
    <property type="taxonomic scope" value="Eukaryota"/>
</dbReference>
<dbReference type="GeneTree" id="ENSGT00940000159909"/>
<dbReference type="HOGENOM" id="CLU_042927_1_0_1"/>
<dbReference type="InParanoid" id="P78412"/>
<dbReference type="OMA" id="EPAVQCQ"/>
<dbReference type="OrthoDB" id="5399138at2759"/>
<dbReference type="PAN-GO" id="P78412">
    <property type="GO annotations" value="7 GO annotations based on evolutionary models"/>
</dbReference>
<dbReference type="PhylomeDB" id="P78412"/>
<dbReference type="TreeFam" id="TF319371"/>
<dbReference type="PathwayCommons" id="P78412"/>
<dbReference type="SignaLink" id="P78412"/>
<dbReference type="BioGRID-ORCS" id="79190">
    <property type="hits" value="27 hits in 1168 CRISPR screens"/>
</dbReference>
<dbReference type="ChiTaRS" id="IRX6">
    <property type="organism name" value="human"/>
</dbReference>
<dbReference type="GeneWiki" id="IRX6"/>
<dbReference type="GenomeRNAi" id="79190"/>
<dbReference type="Pharos" id="P78412">
    <property type="development level" value="Tbio"/>
</dbReference>
<dbReference type="PRO" id="PR:P78412"/>
<dbReference type="Proteomes" id="UP000005640">
    <property type="component" value="Chromosome 16"/>
</dbReference>
<dbReference type="RNAct" id="P78412">
    <property type="molecule type" value="protein"/>
</dbReference>
<dbReference type="Bgee" id="ENSG00000159387">
    <property type="expression patterns" value="Expressed in apex of heart and 74 other cell types or tissues"/>
</dbReference>
<dbReference type="GO" id="GO:0000785">
    <property type="term" value="C:chromatin"/>
    <property type="evidence" value="ECO:0000247"/>
    <property type="project" value="NTNU_SB"/>
</dbReference>
<dbReference type="GO" id="GO:0005634">
    <property type="term" value="C:nucleus"/>
    <property type="evidence" value="ECO:0000318"/>
    <property type="project" value="GO_Central"/>
</dbReference>
<dbReference type="GO" id="GO:0001228">
    <property type="term" value="F:DNA-binding transcription activator activity, RNA polymerase II-specific"/>
    <property type="evidence" value="ECO:0000318"/>
    <property type="project" value="GO_Central"/>
</dbReference>
<dbReference type="GO" id="GO:0000981">
    <property type="term" value="F:DNA-binding transcription factor activity, RNA polymerase II-specific"/>
    <property type="evidence" value="ECO:0000247"/>
    <property type="project" value="NTNU_SB"/>
</dbReference>
<dbReference type="GO" id="GO:0000978">
    <property type="term" value="F:RNA polymerase II cis-regulatory region sequence-specific DNA binding"/>
    <property type="evidence" value="ECO:0000318"/>
    <property type="project" value="GO_Central"/>
</dbReference>
<dbReference type="GO" id="GO:0048468">
    <property type="term" value="P:cell development"/>
    <property type="evidence" value="ECO:0000318"/>
    <property type="project" value="GO_Central"/>
</dbReference>
<dbReference type="GO" id="GO:0030182">
    <property type="term" value="P:neuron differentiation"/>
    <property type="evidence" value="ECO:0000318"/>
    <property type="project" value="GO_Central"/>
</dbReference>
<dbReference type="GO" id="GO:0045893">
    <property type="term" value="P:positive regulation of DNA-templated transcription"/>
    <property type="evidence" value="ECO:0000318"/>
    <property type="project" value="GO_Central"/>
</dbReference>
<dbReference type="GO" id="GO:0006357">
    <property type="term" value="P:regulation of transcription by RNA polymerase II"/>
    <property type="evidence" value="ECO:0000318"/>
    <property type="project" value="GO_Central"/>
</dbReference>
<dbReference type="CDD" id="cd00086">
    <property type="entry name" value="homeodomain"/>
    <property type="match status" value="1"/>
</dbReference>
<dbReference type="FunFam" id="1.10.10.60:FF:000003">
    <property type="entry name" value="Iroquois-class homeobox protein IRX"/>
    <property type="match status" value="1"/>
</dbReference>
<dbReference type="Gene3D" id="1.10.10.60">
    <property type="entry name" value="Homeodomain-like"/>
    <property type="match status" value="1"/>
</dbReference>
<dbReference type="InterPro" id="IPR001356">
    <property type="entry name" value="HD"/>
</dbReference>
<dbReference type="InterPro" id="IPR017970">
    <property type="entry name" value="Homeobox_CS"/>
</dbReference>
<dbReference type="InterPro" id="IPR009057">
    <property type="entry name" value="Homeodomain-like_sf"/>
</dbReference>
<dbReference type="InterPro" id="IPR003893">
    <property type="entry name" value="Iroquois_homeo"/>
</dbReference>
<dbReference type="InterPro" id="IPR008422">
    <property type="entry name" value="KN_HD"/>
</dbReference>
<dbReference type="PANTHER" id="PTHR11211">
    <property type="entry name" value="IROQUOIS-CLASS HOMEODOMAIN PROTEIN IRX"/>
    <property type="match status" value="1"/>
</dbReference>
<dbReference type="PANTHER" id="PTHR11211:SF11">
    <property type="entry name" value="IROQUOIS-CLASS HOMEODOMAIN PROTEIN IRX-6"/>
    <property type="match status" value="1"/>
</dbReference>
<dbReference type="Pfam" id="PF05920">
    <property type="entry name" value="Homeobox_KN"/>
    <property type="match status" value="1"/>
</dbReference>
<dbReference type="SMART" id="SM00389">
    <property type="entry name" value="HOX"/>
    <property type="match status" value="1"/>
</dbReference>
<dbReference type="SMART" id="SM00548">
    <property type="entry name" value="IRO"/>
    <property type="match status" value="1"/>
</dbReference>
<dbReference type="SUPFAM" id="SSF46689">
    <property type="entry name" value="Homeodomain-like"/>
    <property type="match status" value="1"/>
</dbReference>
<dbReference type="PROSITE" id="PS00027">
    <property type="entry name" value="HOMEOBOX_1"/>
    <property type="match status" value="1"/>
</dbReference>
<dbReference type="PROSITE" id="PS50071">
    <property type="entry name" value="HOMEOBOX_2"/>
    <property type="match status" value="1"/>
</dbReference>
<organism>
    <name type="scientific">Homo sapiens</name>
    <name type="common">Human</name>
    <dbReference type="NCBI Taxonomy" id="9606"/>
    <lineage>
        <taxon>Eukaryota</taxon>
        <taxon>Metazoa</taxon>
        <taxon>Chordata</taxon>
        <taxon>Craniata</taxon>
        <taxon>Vertebrata</taxon>
        <taxon>Euteleostomi</taxon>
        <taxon>Mammalia</taxon>
        <taxon>Eutheria</taxon>
        <taxon>Euarchontoglires</taxon>
        <taxon>Primates</taxon>
        <taxon>Haplorrhini</taxon>
        <taxon>Catarrhini</taxon>
        <taxon>Hominidae</taxon>
        <taxon>Homo</taxon>
    </lineage>
</organism>
<accession>P78412</accession>
<accession>B2RN06</accession>
<accession>Q7Z2K0</accession>
<name>IRX6_HUMAN</name>
<feature type="chain" id="PRO_0000049162" description="Iroquois-class homeodomain protein IRX-6">
    <location>
        <begin position="1"/>
        <end position="446"/>
    </location>
</feature>
<feature type="DNA-binding region" description="Homeobox" evidence="2">
    <location>
        <begin position="146"/>
        <end position="208"/>
    </location>
</feature>
<feature type="region of interest" description="Disordered" evidence="3">
    <location>
        <begin position="208"/>
        <end position="273"/>
    </location>
</feature>
<feature type="region of interest" description="Disordered" evidence="3">
    <location>
        <begin position="362"/>
        <end position="394"/>
    </location>
</feature>
<feature type="compositionally biased region" description="Basic and acidic residues" evidence="3">
    <location>
        <begin position="217"/>
        <end position="226"/>
    </location>
</feature>
<feature type="compositionally biased region" description="Acidic residues" evidence="3">
    <location>
        <begin position="256"/>
        <end position="273"/>
    </location>
</feature>
<feature type="sequence conflict" description="In Ref. 5; AAB50003." evidence="4" ref="5">
    <original>S</original>
    <variation>G</variation>
    <location>
        <position position="117"/>
    </location>
</feature>
<feature type="sequence conflict" description="In Ref. 1." evidence="4" ref="1">
    <location>
        <position position="444"/>
    </location>
</feature>
<comment type="function">
    <text evidence="1">Transcription factor. Binds to the iroquois binding site (IBS) motif of target genes to regulate gene expression; functions as a transcriptional activator or repressor. Modulates expression of RCVRN, VSX1, BHLHE22/BHLHB5 and TACR3/Nk3r. Required downstream of retinal bipolar cell specification for the terminal differentiation of type 2, type 3a and possibly type 6 bipolar cells.</text>
</comment>
<comment type="interaction">
    <interactant intactId="EBI-12100506">
        <id>P78412</id>
    </interactant>
    <interactant intactId="EBI-948603">
        <id>Q03989</id>
        <label>ARID5A</label>
    </interactant>
    <organismsDiffer>false</organismsDiffer>
    <experiments>3</experiments>
</comment>
<comment type="interaction">
    <interactant intactId="EBI-12100506">
        <id>P78412</id>
    </interactant>
    <interactant intactId="EBI-748171">
        <id>O43186</id>
        <label>CRX</label>
    </interactant>
    <organismsDiffer>false</organismsDiffer>
    <experiments>3</experiments>
</comment>
<comment type="interaction">
    <interactant intactId="EBI-12100506">
        <id>P78412</id>
    </interactant>
    <interactant intactId="EBI-374781">
        <id>O76003</id>
        <label>GLRX3</label>
    </interactant>
    <organismsDiffer>false</organismsDiffer>
    <experiments>5</experiments>
</comment>
<comment type="interaction">
    <interactant intactId="EBI-12100506">
        <id>P78412</id>
    </interactant>
    <interactant intactId="EBI-740785">
        <id>P49639</id>
        <label>HOXA1</label>
    </interactant>
    <organismsDiffer>false</organismsDiffer>
    <experiments>3</experiments>
</comment>
<comment type="interaction">
    <interactant intactId="EBI-12100506">
        <id>P78412</id>
    </interactant>
    <interactant intactId="EBI-10241353">
        <id>Q3SYF9</id>
        <label>KRTAP19-7</label>
    </interactant>
    <organismsDiffer>false</organismsDiffer>
    <experiments>3</experiments>
</comment>
<comment type="interaction">
    <interactant intactId="EBI-12100506">
        <id>P78412</id>
    </interactant>
    <interactant intactId="EBI-16439278">
        <id>Q6FHY5</id>
        <label>MEOX2</label>
    </interactant>
    <organismsDiffer>false</organismsDiffer>
    <experiments>3</experiments>
</comment>
<comment type="interaction">
    <interactant intactId="EBI-12100506">
        <id>P78412</id>
    </interactant>
    <interactant intactId="EBI-725770">
        <id>P10916</id>
        <label>MYL2</label>
    </interactant>
    <organismsDiffer>false</organismsDiffer>
    <experiments>3</experiments>
</comment>
<comment type="interaction">
    <interactant intactId="EBI-12100506">
        <id>P78412</id>
    </interactant>
    <interactant intactId="EBI-10271199">
        <id>Q8NI38</id>
        <label>NFKBID</label>
    </interactant>
    <organismsDiffer>false</organismsDiffer>
    <experiments>3</experiments>
</comment>
<comment type="interaction">
    <interactant intactId="EBI-12100506">
        <id>P78412</id>
    </interactant>
    <interactant intactId="EBI-357275">
        <id>Q99471</id>
        <label>PFDN5</label>
    </interactant>
    <organismsDiffer>false</organismsDiffer>
    <experiments>3</experiments>
</comment>
<comment type="interaction">
    <interactant intactId="EBI-12100506">
        <id>P78412</id>
    </interactant>
    <interactant intactId="EBI-12096770">
        <id>O60806</id>
        <label>TBX19</label>
    </interactant>
    <organismsDiffer>false</organismsDiffer>
    <experiments>3</experiments>
</comment>
<comment type="interaction">
    <interactant intactId="EBI-12100506">
        <id>P78412</id>
    </interactant>
    <interactant intactId="EBI-11741437">
        <id>Q08117-2</id>
        <label>TLE5</label>
    </interactant>
    <organismsDiffer>false</organismsDiffer>
    <experiments>5</experiments>
</comment>
<comment type="interaction">
    <interactant intactId="EBI-12100506">
        <id>P78412</id>
    </interactant>
    <interactant intactId="EBI-492476">
        <id>Q96RU7</id>
        <label>TRIB3</label>
    </interactant>
    <organismsDiffer>false</organismsDiffer>
    <experiments>3</experiments>
</comment>
<comment type="subcellular location">
    <subcellularLocation>
        <location evidence="4">Nucleus</location>
    </subcellularLocation>
</comment>
<comment type="similarity">
    <text evidence="4">Belongs to the TALE/IRO homeobox family.</text>
</comment>
<reference key="1">
    <citation type="submission" date="2003-07" db="EMBL/GenBank/DDBJ databases">
        <title>Characterization of the human homeobox two-cluster Iroquois gene family.</title>
        <authorList>
            <person name="Hansen L."/>
            <person name="Wu Q."/>
            <person name="Tommerup N."/>
        </authorList>
    </citation>
    <scope>NUCLEOTIDE SEQUENCE [GENOMIC DNA / MRNA]</scope>
</reference>
<reference key="2">
    <citation type="journal article" date="2004" name="Nat. Genet.">
        <title>Complete sequencing and characterization of 21,243 full-length human cDNAs.</title>
        <authorList>
            <person name="Ota T."/>
            <person name="Suzuki Y."/>
            <person name="Nishikawa T."/>
            <person name="Otsuki T."/>
            <person name="Sugiyama T."/>
            <person name="Irie R."/>
            <person name="Wakamatsu A."/>
            <person name="Hayashi K."/>
            <person name="Sato H."/>
            <person name="Nagai K."/>
            <person name="Kimura K."/>
            <person name="Makita H."/>
            <person name="Sekine M."/>
            <person name="Obayashi M."/>
            <person name="Nishi T."/>
            <person name="Shibahara T."/>
            <person name="Tanaka T."/>
            <person name="Ishii S."/>
            <person name="Yamamoto J."/>
            <person name="Saito K."/>
            <person name="Kawai Y."/>
            <person name="Isono Y."/>
            <person name="Nakamura Y."/>
            <person name="Nagahari K."/>
            <person name="Murakami K."/>
            <person name="Yasuda T."/>
            <person name="Iwayanagi T."/>
            <person name="Wagatsuma M."/>
            <person name="Shiratori A."/>
            <person name="Sudo H."/>
            <person name="Hosoiri T."/>
            <person name="Kaku Y."/>
            <person name="Kodaira H."/>
            <person name="Kondo H."/>
            <person name="Sugawara M."/>
            <person name="Takahashi M."/>
            <person name="Kanda K."/>
            <person name="Yokoi T."/>
            <person name="Furuya T."/>
            <person name="Kikkawa E."/>
            <person name="Omura Y."/>
            <person name="Abe K."/>
            <person name="Kamihara K."/>
            <person name="Katsuta N."/>
            <person name="Sato K."/>
            <person name="Tanikawa M."/>
            <person name="Yamazaki M."/>
            <person name="Ninomiya K."/>
            <person name="Ishibashi T."/>
            <person name="Yamashita H."/>
            <person name="Murakawa K."/>
            <person name="Fujimori K."/>
            <person name="Tanai H."/>
            <person name="Kimata M."/>
            <person name="Watanabe M."/>
            <person name="Hiraoka S."/>
            <person name="Chiba Y."/>
            <person name="Ishida S."/>
            <person name="Ono Y."/>
            <person name="Takiguchi S."/>
            <person name="Watanabe S."/>
            <person name="Yosida M."/>
            <person name="Hotuta T."/>
            <person name="Kusano J."/>
            <person name="Kanehori K."/>
            <person name="Takahashi-Fujii A."/>
            <person name="Hara H."/>
            <person name="Tanase T.-O."/>
            <person name="Nomura Y."/>
            <person name="Togiya S."/>
            <person name="Komai F."/>
            <person name="Hara R."/>
            <person name="Takeuchi K."/>
            <person name="Arita M."/>
            <person name="Imose N."/>
            <person name="Musashino K."/>
            <person name="Yuuki H."/>
            <person name="Oshima A."/>
            <person name="Sasaki N."/>
            <person name="Aotsuka S."/>
            <person name="Yoshikawa Y."/>
            <person name="Matsunawa H."/>
            <person name="Ichihara T."/>
            <person name="Shiohata N."/>
            <person name="Sano S."/>
            <person name="Moriya S."/>
            <person name="Momiyama H."/>
            <person name="Satoh N."/>
            <person name="Takami S."/>
            <person name="Terashima Y."/>
            <person name="Suzuki O."/>
            <person name="Nakagawa S."/>
            <person name="Senoh A."/>
            <person name="Mizoguchi H."/>
            <person name="Goto Y."/>
            <person name="Shimizu F."/>
            <person name="Wakebe H."/>
            <person name="Hishigaki H."/>
            <person name="Watanabe T."/>
            <person name="Sugiyama A."/>
            <person name="Takemoto M."/>
            <person name="Kawakami B."/>
            <person name="Yamazaki M."/>
            <person name="Watanabe K."/>
            <person name="Kumagai A."/>
            <person name="Itakura S."/>
            <person name="Fukuzumi Y."/>
            <person name="Fujimori Y."/>
            <person name="Komiyama M."/>
            <person name="Tashiro H."/>
            <person name="Tanigami A."/>
            <person name="Fujiwara T."/>
            <person name="Ono T."/>
            <person name="Yamada K."/>
            <person name="Fujii Y."/>
            <person name="Ozaki K."/>
            <person name="Hirao M."/>
            <person name="Ohmori Y."/>
            <person name="Kawabata A."/>
            <person name="Hikiji T."/>
            <person name="Kobatake N."/>
            <person name="Inagaki H."/>
            <person name="Ikema Y."/>
            <person name="Okamoto S."/>
            <person name="Okitani R."/>
            <person name="Kawakami T."/>
            <person name="Noguchi S."/>
            <person name="Itoh T."/>
            <person name="Shigeta K."/>
            <person name="Senba T."/>
            <person name="Matsumura K."/>
            <person name="Nakajima Y."/>
            <person name="Mizuno T."/>
            <person name="Morinaga M."/>
            <person name="Sasaki M."/>
            <person name="Togashi T."/>
            <person name="Oyama M."/>
            <person name="Hata H."/>
            <person name="Watanabe M."/>
            <person name="Komatsu T."/>
            <person name="Mizushima-Sugano J."/>
            <person name="Satoh T."/>
            <person name="Shirai Y."/>
            <person name="Takahashi Y."/>
            <person name="Nakagawa K."/>
            <person name="Okumura K."/>
            <person name="Nagase T."/>
            <person name="Nomura N."/>
            <person name="Kikuchi H."/>
            <person name="Masuho Y."/>
            <person name="Yamashita R."/>
            <person name="Nakai K."/>
            <person name="Yada T."/>
            <person name="Nakamura Y."/>
            <person name="Ohara O."/>
            <person name="Isogai T."/>
            <person name="Sugano S."/>
        </authorList>
    </citation>
    <scope>NUCLEOTIDE SEQUENCE [LARGE SCALE MRNA]</scope>
    <source>
        <tissue>Thalamus</tissue>
    </source>
</reference>
<reference key="3">
    <citation type="submission" date="2005-07" db="EMBL/GenBank/DDBJ databases">
        <authorList>
            <person name="Mural R.J."/>
            <person name="Istrail S."/>
            <person name="Sutton G.G."/>
            <person name="Florea L."/>
            <person name="Halpern A.L."/>
            <person name="Mobarry C.M."/>
            <person name="Lippert R."/>
            <person name="Walenz B."/>
            <person name="Shatkay H."/>
            <person name="Dew I."/>
            <person name="Miller J.R."/>
            <person name="Flanigan M.J."/>
            <person name="Edwards N.J."/>
            <person name="Bolanos R."/>
            <person name="Fasulo D."/>
            <person name="Halldorsson B.V."/>
            <person name="Hannenhalli S."/>
            <person name="Turner R."/>
            <person name="Yooseph S."/>
            <person name="Lu F."/>
            <person name="Nusskern D.R."/>
            <person name="Shue B.C."/>
            <person name="Zheng X.H."/>
            <person name="Zhong F."/>
            <person name="Delcher A.L."/>
            <person name="Huson D.H."/>
            <person name="Kravitz S.A."/>
            <person name="Mouchard L."/>
            <person name="Reinert K."/>
            <person name="Remington K.A."/>
            <person name="Clark A.G."/>
            <person name="Waterman M.S."/>
            <person name="Eichler E.E."/>
            <person name="Adams M.D."/>
            <person name="Hunkapiller M.W."/>
            <person name="Myers E.W."/>
            <person name="Venter J.C."/>
        </authorList>
    </citation>
    <scope>NUCLEOTIDE SEQUENCE [LARGE SCALE GENOMIC DNA]</scope>
</reference>
<reference key="4">
    <citation type="journal article" date="2004" name="Genome Res.">
        <title>The status, quality, and expansion of the NIH full-length cDNA project: the Mammalian Gene Collection (MGC).</title>
        <authorList>
            <consortium name="The MGC Project Team"/>
        </authorList>
    </citation>
    <scope>NUCLEOTIDE SEQUENCE [LARGE SCALE MRNA]</scope>
</reference>
<reference key="5">
    <citation type="submission" date="1997-03" db="EMBL/GenBank/DDBJ databases">
        <title>IRX: a new family of human homeobox genes from the breast.</title>
        <authorList>
            <person name="Lewis M.T."/>
            <person name="Strickland P.A."/>
            <person name="Ross S."/>
            <person name="Snyder C.J."/>
            <person name="Daniel C.W."/>
        </authorList>
    </citation>
    <scope>NUCLEOTIDE SEQUENCE [MRNA] OF 1-195</scope>
</reference>
<evidence type="ECO:0000250" key="1">
    <source>
        <dbReference type="UniProtKB" id="Q9ER75"/>
    </source>
</evidence>
<evidence type="ECO:0000255" key="2">
    <source>
        <dbReference type="PROSITE-ProRule" id="PRU00108"/>
    </source>
</evidence>
<evidence type="ECO:0000256" key="3">
    <source>
        <dbReference type="SAM" id="MobiDB-lite"/>
    </source>
</evidence>
<evidence type="ECO:0000305" key="4"/>
<gene>
    <name type="primary">IRX6</name>
    <name type="synonym">IRX7</name>
    <name type="synonym">IRXB3</name>
</gene>
<proteinExistence type="evidence at protein level"/>